<gene>
    <name evidence="1" type="primary">rsmG</name>
    <name type="ordered locus">PEPE_1724</name>
</gene>
<keyword id="KW-0963">Cytoplasm</keyword>
<keyword id="KW-0489">Methyltransferase</keyword>
<keyword id="KW-0698">rRNA processing</keyword>
<keyword id="KW-0949">S-adenosyl-L-methionine</keyword>
<keyword id="KW-0808">Transferase</keyword>
<accession>Q03DH7</accession>
<proteinExistence type="inferred from homology"/>
<dbReference type="EC" id="2.1.1.-" evidence="1"/>
<dbReference type="EMBL" id="CP000422">
    <property type="protein sequence ID" value="ABJ68745.1"/>
    <property type="molecule type" value="Genomic_DNA"/>
</dbReference>
<dbReference type="RefSeq" id="WP_011673834.1">
    <property type="nucleotide sequence ID" value="NC_008525.1"/>
</dbReference>
<dbReference type="SMR" id="Q03DH7"/>
<dbReference type="STRING" id="278197.PEPE_1724"/>
<dbReference type="GeneID" id="33061528"/>
<dbReference type="KEGG" id="ppe:PEPE_1724"/>
<dbReference type="eggNOG" id="COG0357">
    <property type="taxonomic scope" value="Bacteria"/>
</dbReference>
<dbReference type="HOGENOM" id="CLU_065341_0_2_9"/>
<dbReference type="OrthoDB" id="9808773at2"/>
<dbReference type="Proteomes" id="UP000000773">
    <property type="component" value="Chromosome"/>
</dbReference>
<dbReference type="GO" id="GO:0005829">
    <property type="term" value="C:cytosol"/>
    <property type="evidence" value="ECO:0007669"/>
    <property type="project" value="TreeGrafter"/>
</dbReference>
<dbReference type="GO" id="GO:0070043">
    <property type="term" value="F:rRNA (guanine-N7-)-methyltransferase activity"/>
    <property type="evidence" value="ECO:0007669"/>
    <property type="project" value="UniProtKB-UniRule"/>
</dbReference>
<dbReference type="FunFam" id="3.40.50.150:FF:000041">
    <property type="entry name" value="Ribosomal RNA small subunit methyltransferase G"/>
    <property type="match status" value="1"/>
</dbReference>
<dbReference type="Gene3D" id="3.40.50.150">
    <property type="entry name" value="Vaccinia Virus protein VP39"/>
    <property type="match status" value="1"/>
</dbReference>
<dbReference type="HAMAP" id="MF_00074">
    <property type="entry name" value="16SrRNA_methyltr_G"/>
    <property type="match status" value="1"/>
</dbReference>
<dbReference type="InterPro" id="IPR003682">
    <property type="entry name" value="rRNA_ssu_MeTfrase_G"/>
</dbReference>
<dbReference type="InterPro" id="IPR029063">
    <property type="entry name" value="SAM-dependent_MTases_sf"/>
</dbReference>
<dbReference type="NCBIfam" id="TIGR00138">
    <property type="entry name" value="rsmG_gidB"/>
    <property type="match status" value="1"/>
</dbReference>
<dbReference type="PANTHER" id="PTHR31760">
    <property type="entry name" value="S-ADENOSYL-L-METHIONINE-DEPENDENT METHYLTRANSFERASES SUPERFAMILY PROTEIN"/>
    <property type="match status" value="1"/>
</dbReference>
<dbReference type="PANTHER" id="PTHR31760:SF0">
    <property type="entry name" value="S-ADENOSYL-L-METHIONINE-DEPENDENT METHYLTRANSFERASES SUPERFAMILY PROTEIN"/>
    <property type="match status" value="1"/>
</dbReference>
<dbReference type="Pfam" id="PF02527">
    <property type="entry name" value="GidB"/>
    <property type="match status" value="1"/>
</dbReference>
<dbReference type="PIRSF" id="PIRSF003078">
    <property type="entry name" value="GidB"/>
    <property type="match status" value="1"/>
</dbReference>
<dbReference type="SUPFAM" id="SSF53335">
    <property type="entry name" value="S-adenosyl-L-methionine-dependent methyltransferases"/>
    <property type="match status" value="1"/>
</dbReference>
<evidence type="ECO:0000255" key="1">
    <source>
        <dbReference type="HAMAP-Rule" id="MF_00074"/>
    </source>
</evidence>
<evidence type="ECO:0000256" key="2">
    <source>
        <dbReference type="SAM" id="MobiDB-lite"/>
    </source>
</evidence>
<protein>
    <recommendedName>
        <fullName evidence="1">Ribosomal RNA small subunit methyltransferase G</fullName>
        <ecNumber evidence="1">2.1.1.-</ecNumber>
    </recommendedName>
    <alternativeName>
        <fullName evidence="1">16S rRNA 7-methylguanosine methyltransferase</fullName>
        <shortName evidence="1">16S rRNA m7G methyltransferase</shortName>
    </alternativeName>
</protein>
<sequence>MTPEEFKKALEDKGYQISDHQMAQFATYYKMLVETNEHVNLTAITEENEVYLKHFYDSVTPLLEAPEYFKSGAELCDVGAGAGFPSLPMKILFPSLKVTIVDSLNKRITFLKTLVDQLELTDVTLVHDRAETFGAKKSVYREKFEIVTARAVARLSVLSELCIPLVKQNGFFIALKAANTEQELSDGKMAIAILGGKLIVDKDFALPATGDERHLVVVEKKKQTPNKYPRKPGTPGKDPIGKK</sequence>
<name>RSMG_PEDPA</name>
<feature type="chain" id="PRO_1000010177" description="Ribosomal RNA small subunit methyltransferase G">
    <location>
        <begin position="1"/>
        <end position="243"/>
    </location>
</feature>
<feature type="region of interest" description="Disordered" evidence="2">
    <location>
        <begin position="219"/>
        <end position="243"/>
    </location>
</feature>
<feature type="binding site" evidence="1">
    <location>
        <position position="79"/>
    </location>
    <ligand>
        <name>S-adenosyl-L-methionine</name>
        <dbReference type="ChEBI" id="CHEBI:59789"/>
    </ligand>
</feature>
<feature type="binding site" evidence="1">
    <location>
        <position position="84"/>
    </location>
    <ligand>
        <name>S-adenosyl-L-methionine</name>
        <dbReference type="ChEBI" id="CHEBI:59789"/>
    </ligand>
</feature>
<feature type="binding site" evidence="1">
    <location>
        <begin position="130"/>
        <end position="131"/>
    </location>
    <ligand>
        <name>S-adenosyl-L-methionine</name>
        <dbReference type="ChEBI" id="CHEBI:59789"/>
    </ligand>
</feature>
<feature type="binding site" evidence="1">
    <location>
        <position position="150"/>
    </location>
    <ligand>
        <name>S-adenosyl-L-methionine</name>
        <dbReference type="ChEBI" id="CHEBI:59789"/>
    </ligand>
</feature>
<reference key="1">
    <citation type="journal article" date="2006" name="Proc. Natl. Acad. Sci. U.S.A.">
        <title>Comparative genomics of the lactic acid bacteria.</title>
        <authorList>
            <person name="Makarova K.S."/>
            <person name="Slesarev A."/>
            <person name="Wolf Y.I."/>
            <person name="Sorokin A."/>
            <person name="Mirkin B."/>
            <person name="Koonin E.V."/>
            <person name="Pavlov A."/>
            <person name="Pavlova N."/>
            <person name="Karamychev V."/>
            <person name="Polouchine N."/>
            <person name="Shakhova V."/>
            <person name="Grigoriev I."/>
            <person name="Lou Y."/>
            <person name="Rohksar D."/>
            <person name="Lucas S."/>
            <person name="Huang K."/>
            <person name="Goodstein D.M."/>
            <person name="Hawkins T."/>
            <person name="Plengvidhya V."/>
            <person name="Welker D."/>
            <person name="Hughes J."/>
            <person name="Goh Y."/>
            <person name="Benson A."/>
            <person name="Baldwin K."/>
            <person name="Lee J.-H."/>
            <person name="Diaz-Muniz I."/>
            <person name="Dosti B."/>
            <person name="Smeianov V."/>
            <person name="Wechter W."/>
            <person name="Barabote R."/>
            <person name="Lorca G."/>
            <person name="Altermann E."/>
            <person name="Barrangou R."/>
            <person name="Ganesan B."/>
            <person name="Xie Y."/>
            <person name="Rawsthorne H."/>
            <person name="Tamir D."/>
            <person name="Parker C."/>
            <person name="Breidt F."/>
            <person name="Broadbent J.R."/>
            <person name="Hutkins R."/>
            <person name="O'Sullivan D."/>
            <person name="Steele J."/>
            <person name="Unlu G."/>
            <person name="Saier M.H. Jr."/>
            <person name="Klaenhammer T."/>
            <person name="Richardson P."/>
            <person name="Kozyavkin S."/>
            <person name="Weimer B.C."/>
            <person name="Mills D.A."/>
        </authorList>
    </citation>
    <scope>NUCLEOTIDE SEQUENCE [LARGE SCALE GENOMIC DNA]</scope>
    <source>
        <strain>ATCC 25745 / CCUG 21536 / LMG 10740 / 183-1w</strain>
    </source>
</reference>
<organism>
    <name type="scientific">Pediococcus pentosaceus (strain ATCC 25745 / CCUG 21536 / LMG 10740 / 183-1w)</name>
    <dbReference type="NCBI Taxonomy" id="278197"/>
    <lineage>
        <taxon>Bacteria</taxon>
        <taxon>Bacillati</taxon>
        <taxon>Bacillota</taxon>
        <taxon>Bacilli</taxon>
        <taxon>Lactobacillales</taxon>
        <taxon>Lactobacillaceae</taxon>
        <taxon>Pediococcus</taxon>
    </lineage>
</organism>
<comment type="function">
    <text evidence="1">Specifically methylates the N7 position of a guanine in 16S rRNA.</text>
</comment>
<comment type="subcellular location">
    <subcellularLocation>
        <location evidence="1">Cytoplasm</location>
    </subcellularLocation>
</comment>
<comment type="similarity">
    <text evidence="1">Belongs to the methyltransferase superfamily. RNA methyltransferase RsmG family.</text>
</comment>